<gene>
    <name evidence="2" type="primary">atpE</name>
    <name type="ordered locus">MPN_603</name>
    <name type="ORF">MP239</name>
</gene>
<comment type="function">
    <text evidence="2">F(1)F(0) ATP synthase produces ATP from ADP in the presence of a proton or sodium gradient. F-type ATPases consist of two structural domains, F(1) containing the extramembraneous catalytic core and F(0) containing the membrane proton channel, linked together by a central stalk and a peripheral stalk. During catalysis, ATP synthesis in the catalytic domain of F(1) is coupled via a rotary mechanism of the central stalk subunits to proton translocation.</text>
</comment>
<comment type="function">
    <text evidence="2">Key component of the F(0) channel; it plays a direct role in translocation across the membrane. A homomeric c-ring of between 10-14 subunits forms the central stalk rotor element with the F(1) delta and epsilon subunits.</text>
</comment>
<comment type="subunit">
    <text evidence="2">F-type ATPases have 2 components, F(1) - the catalytic core - and F(0) - the membrane proton channel. F(1) has five subunits: alpha(3), beta(3), gamma(1), delta(1), epsilon(1). F(0) has three main subunits: a(1), b(2) and c(10-14). The alpha and beta chains form an alternating ring which encloses part of the gamma chain. F(1) is attached to F(0) by a central stalk formed by the gamma and epsilon chains, while a peripheral stalk is formed by the delta and b chains.</text>
</comment>
<comment type="subcellular location">
    <subcellularLocation>
        <location evidence="2">Cell membrane</location>
        <topology evidence="2">Multi-pass membrane protein</topology>
    </subcellularLocation>
</comment>
<comment type="miscellaneous">
    <text evidence="1">Dicyclohexylcarbodiimide (DCDD) binding to the active glutamate residue inhibits ATPase in vitro.</text>
</comment>
<comment type="similarity">
    <text evidence="2">Belongs to the ATPase C chain family.</text>
</comment>
<dbReference type="EMBL" id="U43738">
    <property type="protein sequence ID" value="AAC43654.1"/>
    <property type="molecule type" value="Genomic_DNA"/>
</dbReference>
<dbReference type="EMBL" id="U00089">
    <property type="protein sequence ID" value="AAB95887.1"/>
    <property type="molecule type" value="Genomic_DNA"/>
</dbReference>
<dbReference type="PIR" id="S62844">
    <property type="entry name" value="S62844"/>
</dbReference>
<dbReference type="RefSeq" id="NP_110292.1">
    <property type="nucleotide sequence ID" value="NC_000912.1"/>
</dbReference>
<dbReference type="RefSeq" id="WP_010874960.1">
    <property type="nucleotide sequence ID" value="NZ_OU342337.1"/>
</dbReference>
<dbReference type="SMR" id="Q59550"/>
<dbReference type="STRING" id="272634.MPN_603"/>
<dbReference type="EnsemblBacteria" id="AAB95887">
    <property type="protein sequence ID" value="AAB95887"/>
    <property type="gene ID" value="MPN_603"/>
</dbReference>
<dbReference type="KEGG" id="mpn:MPN_603"/>
<dbReference type="PATRIC" id="fig|272634.6.peg.666"/>
<dbReference type="HOGENOM" id="CLU_148047_2_2_14"/>
<dbReference type="OrthoDB" id="9810379at2"/>
<dbReference type="BioCyc" id="MetaCyc:MONOMER-537"/>
<dbReference type="BioCyc" id="MPNE272634:G1GJ3-978-MONOMER"/>
<dbReference type="Proteomes" id="UP000000808">
    <property type="component" value="Chromosome"/>
</dbReference>
<dbReference type="GO" id="GO:0005886">
    <property type="term" value="C:plasma membrane"/>
    <property type="evidence" value="ECO:0007669"/>
    <property type="project" value="UniProtKB-SubCell"/>
</dbReference>
<dbReference type="GO" id="GO:0045259">
    <property type="term" value="C:proton-transporting ATP synthase complex"/>
    <property type="evidence" value="ECO:0007669"/>
    <property type="project" value="UniProtKB-KW"/>
</dbReference>
<dbReference type="GO" id="GO:0033177">
    <property type="term" value="C:proton-transporting two-sector ATPase complex, proton-transporting domain"/>
    <property type="evidence" value="ECO:0007669"/>
    <property type="project" value="InterPro"/>
</dbReference>
<dbReference type="GO" id="GO:0008289">
    <property type="term" value="F:lipid binding"/>
    <property type="evidence" value="ECO:0007669"/>
    <property type="project" value="UniProtKB-KW"/>
</dbReference>
<dbReference type="GO" id="GO:0046933">
    <property type="term" value="F:proton-transporting ATP synthase activity, rotational mechanism"/>
    <property type="evidence" value="ECO:0007669"/>
    <property type="project" value="UniProtKB-UniRule"/>
</dbReference>
<dbReference type="CDD" id="cd18184">
    <property type="entry name" value="ATP-synt_Fo_c_NaATPase"/>
    <property type="match status" value="1"/>
</dbReference>
<dbReference type="FunFam" id="1.20.20.10:FF:000004">
    <property type="entry name" value="ATP synthase subunit c"/>
    <property type="match status" value="1"/>
</dbReference>
<dbReference type="Gene3D" id="1.20.20.10">
    <property type="entry name" value="F1F0 ATP synthase subunit C"/>
    <property type="match status" value="1"/>
</dbReference>
<dbReference type="HAMAP" id="MF_01396">
    <property type="entry name" value="ATP_synth_c_bact"/>
    <property type="match status" value="1"/>
</dbReference>
<dbReference type="InterPro" id="IPR000454">
    <property type="entry name" value="ATP_synth_F0_csu"/>
</dbReference>
<dbReference type="InterPro" id="IPR020537">
    <property type="entry name" value="ATP_synth_F0_csu_DDCD_BS"/>
</dbReference>
<dbReference type="InterPro" id="IPR038662">
    <property type="entry name" value="ATP_synth_F0_csu_sf"/>
</dbReference>
<dbReference type="InterPro" id="IPR002379">
    <property type="entry name" value="ATPase_proteolipid_c-like_dom"/>
</dbReference>
<dbReference type="InterPro" id="IPR035921">
    <property type="entry name" value="F/V-ATP_Csub_sf"/>
</dbReference>
<dbReference type="NCBIfam" id="NF005521">
    <property type="entry name" value="PRK07159.1"/>
    <property type="match status" value="1"/>
</dbReference>
<dbReference type="PANTHER" id="PTHR10031">
    <property type="entry name" value="ATP SYNTHASE LIPID-BINDING PROTEIN, MITOCHONDRIAL"/>
    <property type="match status" value="1"/>
</dbReference>
<dbReference type="PANTHER" id="PTHR10031:SF0">
    <property type="entry name" value="ATPASE PROTEIN 9"/>
    <property type="match status" value="1"/>
</dbReference>
<dbReference type="Pfam" id="PF00137">
    <property type="entry name" value="ATP-synt_C"/>
    <property type="match status" value="1"/>
</dbReference>
<dbReference type="PRINTS" id="PR00124">
    <property type="entry name" value="ATPASEC"/>
</dbReference>
<dbReference type="SUPFAM" id="SSF81333">
    <property type="entry name" value="F1F0 ATP synthase subunit C"/>
    <property type="match status" value="1"/>
</dbReference>
<dbReference type="PROSITE" id="PS00605">
    <property type="entry name" value="ATPASE_C"/>
    <property type="match status" value="1"/>
</dbReference>
<name>ATPL_MYCPN</name>
<proteinExistence type="inferred from homology"/>
<sequence length="105" mass="11016">MEHVNEILATVGRILHETTTANTNVANKSTERLGAYIGAGITMVGGATVGLGQGYIFGKAVEAVARNPEVEKQVFKLIFIGSAISESSSIYSLLIAFILIFVSGA</sequence>
<reference key="1">
    <citation type="journal article" date="1996" name="Nucleic Acids Res.">
        <title>Sequence analysis of 56 kb from the genome of the bacterium Mycoplasma pneumoniae comprising the dnaA region, the atp operon and a cluster of ribosomal protein genes.</title>
        <authorList>
            <person name="Hilbert H."/>
            <person name="Himmelreich R."/>
            <person name="Plagens H."/>
            <person name="Herrmann R."/>
        </authorList>
    </citation>
    <scope>NUCLEOTIDE SEQUENCE [GENOMIC DNA]</scope>
    <source>
        <strain>ATCC 29342 / M129 / Subtype 1</strain>
    </source>
</reference>
<reference key="2">
    <citation type="journal article" date="1996" name="Nucleic Acids Res.">
        <title>Complete sequence analysis of the genome of the bacterium Mycoplasma pneumoniae.</title>
        <authorList>
            <person name="Himmelreich R."/>
            <person name="Hilbert H."/>
            <person name="Plagens H."/>
            <person name="Pirkl E."/>
            <person name="Li B.-C."/>
            <person name="Herrmann R."/>
        </authorList>
    </citation>
    <scope>NUCLEOTIDE SEQUENCE [LARGE SCALE GENOMIC DNA]</scope>
    <source>
        <strain>ATCC 29342 / M129 / Subtype 1</strain>
    </source>
</reference>
<organism>
    <name type="scientific">Mycoplasma pneumoniae (strain ATCC 29342 / M129 / Subtype 1)</name>
    <name type="common">Mycoplasmoides pneumoniae</name>
    <dbReference type="NCBI Taxonomy" id="272634"/>
    <lineage>
        <taxon>Bacteria</taxon>
        <taxon>Bacillati</taxon>
        <taxon>Mycoplasmatota</taxon>
        <taxon>Mycoplasmoidales</taxon>
        <taxon>Mycoplasmoidaceae</taxon>
        <taxon>Mycoplasmoides</taxon>
    </lineage>
</organism>
<evidence type="ECO:0000250" key="1"/>
<evidence type="ECO:0000255" key="2">
    <source>
        <dbReference type="HAMAP-Rule" id="MF_01396"/>
    </source>
</evidence>
<protein>
    <recommendedName>
        <fullName evidence="2">ATP synthase subunit c</fullName>
    </recommendedName>
    <alternativeName>
        <fullName evidence="2">ATP synthase F(0) sector subunit c</fullName>
    </alternativeName>
    <alternativeName>
        <fullName evidence="2">F-type ATPase subunit c</fullName>
        <shortName evidence="2">F-ATPase subunit c</shortName>
    </alternativeName>
    <alternativeName>
        <fullName evidence="2">Lipid-binding protein</fullName>
    </alternativeName>
</protein>
<feature type="chain" id="PRO_0000112154" description="ATP synthase subunit c">
    <location>
        <begin position="1"/>
        <end position="105"/>
    </location>
</feature>
<feature type="transmembrane region" description="Helical" evidence="2">
    <location>
        <begin position="37"/>
        <end position="57"/>
    </location>
</feature>
<feature type="transmembrane region" description="Helical" evidence="2">
    <location>
        <begin position="82"/>
        <end position="102"/>
    </location>
</feature>
<feature type="site" description="Reversibly protonated during proton transport" evidence="2">
    <location>
        <position position="86"/>
    </location>
</feature>
<accession>Q59550</accession>
<keyword id="KW-0066">ATP synthesis</keyword>
<keyword id="KW-1003">Cell membrane</keyword>
<keyword id="KW-0138">CF(0)</keyword>
<keyword id="KW-0375">Hydrogen ion transport</keyword>
<keyword id="KW-0406">Ion transport</keyword>
<keyword id="KW-0446">Lipid-binding</keyword>
<keyword id="KW-0472">Membrane</keyword>
<keyword id="KW-1185">Reference proteome</keyword>
<keyword id="KW-0812">Transmembrane</keyword>
<keyword id="KW-1133">Transmembrane helix</keyword>
<keyword id="KW-0813">Transport</keyword>